<keyword id="KW-0028">Amino-acid biosynthesis</keyword>
<keyword id="KW-0963">Cytoplasm</keyword>
<keyword id="KW-0368">Histidine biosynthesis</keyword>
<keyword id="KW-0456">Lyase</keyword>
<keyword id="KW-1185">Reference proteome</keyword>
<dbReference type="EC" id="4.3.2.10" evidence="1"/>
<dbReference type="EMBL" id="AM942759">
    <property type="protein sequence ID" value="CAR41546.1"/>
    <property type="molecule type" value="Genomic_DNA"/>
</dbReference>
<dbReference type="RefSeq" id="WP_004244523.1">
    <property type="nucleotide sequence ID" value="NC_010554.1"/>
</dbReference>
<dbReference type="SMR" id="B4ESZ8"/>
<dbReference type="EnsemblBacteria" id="CAR41546">
    <property type="protein sequence ID" value="CAR41546"/>
    <property type="gene ID" value="PMI0659"/>
</dbReference>
<dbReference type="GeneID" id="6801298"/>
<dbReference type="KEGG" id="pmr:PMI0659"/>
<dbReference type="eggNOG" id="COG0107">
    <property type="taxonomic scope" value="Bacteria"/>
</dbReference>
<dbReference type="HOGENOM" id="CLU_048577_4_0_6"/>
<dbReference type="UniPathway" id="UPA00031">
    <property type="reaction ID" value="UER00010"/>
</dbReference>
<dbReference type="Proteomes" id="UP000008319">
    <property type="component" value="Chromosome"/>
</dbReference>
<dbReference type="GO" id="GO:0005737">
    <property type="term" value="C:cytoplasm"/>
    <property type="evidence" value="ECO:0007669"/>
    <property type="project" value="UniProtKB-SubCell"/>
</dbReference>
<dbReference type="GO" id="GO:0000107">
    <property type="term" value="F:imidazoleglycerol-phosphate synthase activity"/>
    <property type="evidence" value="ECO:0007669"/>
    <property type="project" value="UniProtKB-UniRule"/>
</dbReference>
<dbReference type="GO" id="GO:0016829">
    <property type="term" value="F:lyase activity"/>
    <property type="evidence" value="ECO:0007669"/>
    <property type="project" value="UniProtKB-KW"/>
</dbReference>
<dbReference type="GO" id="GO:0000105">
    <property type="term" value="P:L-histidine biosynthetic process"/>
    <property type="evidence" value="ECO:0007669"/>
    <property type="project" value="UniProtKB-UniRule"/>
</dbReference>
<dbReference type="CDD" id="cd04731">
    <property type="entry name" value="HisF"/>
    <property type="match status" value="1"/>
</dbReference>
<dbReference type="FunFam" id="3.20.20.70:FF:000006">
    <property type="entry name" value="Imidazole glycerol phosphate synthase subunit HisF"/>
    <property type="match status" value="1"/>
</dbReference>
<dbReference type="Gene3D" id="3.20.20.70">
    <property type="entry name" value="Aldolase class I"/>
    <property type="match status" value="1"/>
</dbReference>
<dbReference type="HAMAP" id="MF_01013">
    <property type="entry name" value="HisF"/>
    <property type="match status" value="1"/>
</dbReference>
<dbReference type="InterPro" id="IPR013785">
    <property type="entry name" value="Aldolase_TIM"/>
</dbReference>
<dbReference type="InterPro" id="IPR006062">
    <property type="entry name" value="His_biosynth"/>
</dbReference>
<dbReference type="InterPro" id="IPR004651">
    <property type="entry name" value="HisF"/>
</dbReference>
<dbReference type="InterPro" id="IPR050064">
    <property type="entry name" value="IGPS_HisA/HisF"/>
</dbReference>
<dbReference type="InterPro" id="IPR011060">
    <property type="entry name" value="RibuloseP-bd_barrel"/>
</dbReference>
<dbReference type="NCBIfam" id="TIGR00735">
    <property type="entry name" value="hisF"/>
    <property type="match status" value="1"/>
</dbReference>
<dbReference type="PANTHER" id="PTHR21235:SF2">
    <property type="entry name" value="IMIDAZOLE GLYCEROL PHOSPHATE SYNTHASE HISHF"/>
    <property type="match status" value="1"/>
</dbReference>
<dbReference type="PANTHER" id="PTHR21235">
    <property type="entry name" value="IMIDAZOLE GLYCEROL PHOSPHATE SYNTHASE SUBUNIT HISF/H IGP SYNTHASE SUBUNIT HISF/H"/>
    <property type="match status" value="1"/>
</dbReference>
<dbReference type="Pfam" id="PF00977">
    <property type="entry name" value="His_biosynth"/>
    <property type="match status" value="1"/>
</dbReference>
<dbReference type="SUPFAM" id="SSF51366">
    <property type="entry name" value="Ribulose-phoshate binding barrel"/>
    <property type="match status" value="1"/>
</dbReference>
<organism>
    <name type="scientific">Proteus mirabilis (strain HI4320)</name>
    <dbReference type="NCBI Taxonomy" id="529507"/>
    <lineage>
        <taxon>Bacteria</taxon>
        <taxon>Pseudomonadati</taxon>
        <taxon>Pseudomonadota</taxon>
        <taxon>Gammaproteobacteria</taxon>
        <taxon>Enterobacterales</taxon>
        <taxon>Morganellaceae</taxon>
        <taxon>Proteus</taxon>
    </lineage>
</organism>
<reference key="1">
    <citation type="journal article" date="2008" name="J. Bacteriol.">
        <title>Complete genome sequence of uropathogenic Proteus mirabilis, a master of both adherence and motility.</title>
        <authorList>
            <person name="Pearson M.M."/>
            <person name="Sebaihia M."/>
            <person name="Churcher C."/>
            <person name="Quail M.A."/>
            <person name="Seshasayee A.S."/>
            <person name="Luscombe N.M."/>
            <person name="Abdellah Z."/>
            <person name="Arrosmith C."/>
            <person name="Atkin B."/>
            <person name="Chillingworth T."/>
            <person name="Hauser H."/>
            <person name="Jagels K."/>
            <person name="Moule S."/>
            <person name="Mungall K."/>
            <person name="Norbertczak H."/>
            <person name="Rabbinowitsch E."/>
            <person name="Walker D."/>
            <person name="Whithead S."/>
            <person name="Thomson N.R."/>
            <person name="Rather P.N."/>
            <person name="Parkhill J."/>
            <person name="Mobley H.L.T."/>
        </authorList>
    </citation>
    <scope>NUCLEOTIDE SEQUENCE [LARGE SCALE GENOMIC DNA]</scope>
    <source>
        <strain>HI4320</strain>
    </source>
</reference>
<sequence>MLAKRIIPCLDVRDGQVVKGVQFRNHEIIGDIVPLAERYAKEGADELVFYDITASSDGRVVDKSWVSRVAEVIDIPFCVAGGIRSVEDAGKILSFGADKISINSPALSDPTLISRLADRYGVQCVVVGIDTWFDEKTGEYLVYQFTGDEKRTQQTPWKTLDWVQEVQQRGAGEIVLNMMNQDGVRQGYDLKQLALVRQVTQVPMIASGGAGEMSHFLDAFKLANVDGALAASVFHKQIININELKQYLAENGVKVRI</sequence>
<comment type="function">
    <text evidence="1">IGPS catalyzes the conversion of PRFAR and glutamine to IGP, AICAR and glutamate. The HisF subunit catalyzes the cyclization activity that produces IGP and AICAR from PRFAR using the ammonia provided by the HisH subunit.</text>
</comment>
<comment type="catalytic activity">
    <reaction evidence="1">
        <text>5-[(5-phospho-1-deoxy-D-ribulos-1-ylimino)methylamino]-1-(5-phospho-beta-D-ribosyl)imidazole-4-carboxamide + L-glutamine = D-erythro-1-(imidazol-4-yl)glycerol 3-phosphate + 5-amino-1-(5-phospho-beta-D-ribosyl)imidazole-4-carboxamide + L-glutamate + H(+)</text>
        <dbReference type="Rhea" id="RHEA:24793"/>
        <dbReference type="ChEBI" id="CHEBI:15378"/>
        <dbReference type="ChEBI" id="CHEBI:29985"/>
        <dbReference type="ChEBI" id="CHEBI:58278"/>
        <dbReference type="ChEBI" id="CHEBI:58359"/>
        <dbReference type="ChEBI" id="CHEBI:58475"/>
        <dbReference type="ChEBI" id="CHEBI:58525"/>
        <dbReference type="EC" id="4.3.2.10"/>
    </reaction>
</comment>
<comment type="pathway">
    <text evidence="1">Amino-acid biosynthesis; L-histidine biosynthesis; L-histidine from 5-phospho-alpha-D-ribose 1-diphosphate: step 5/9.</text>
</comment>
<comment type="subunit">
    <text evidence="1">Heterodimer of HisH and HisF.</text>
</comment>
<comment type="subcellular location">
    <subcellularLocation>
        <location evidence="1">Cytoplasm</location>
    </subcellularLocation>
</comment>
<comment type="similarity">
    <text evidence="1">Belongs to the HisA/HisF family.</text>
</comment>
<evidence type="ECO:0000255" key="1">
    <source>
        <dbReference type="HAMAP-Rule" id="MF_01013"/>
    </source>
</evidence>
<name>HIS6_PROMH</name>
<proteinExistence type="inferred from homology"/>
<protein>
    <recommendedName>
        <fullName evidence="1">Imidazole glycerol phosphate synthase subunit HisF</fullName>
        <ecNumber evidence="1">4.3.2.10</ecNumber>
    </recommendedName>
    <alternativeName>
        <fullName evidence="1">IGP synthase cyclase subunit</fullName>
    </alternativeName>
    <alternativeName>
        <fullName evidence="1">IGP synthase subunit HisF</fullName>
    </alternativeName>
    <alternativeName>
        <fullName evidence="1">ImGP synthase subunit HisF</fullName>
        <shortName evidence="1">IGPS subunit HisF</shortName>
    </alternativeName>
</protein>
<accession>B4ESZ8</accession>
<gene>
    <name evidence="1" type="primary">hisF</name>
    <name type="ordered locus">PMI0659</name>
</gene>
<feature type="chain" id="PRO_1000190592" description="Imidazole glycerol phosphate synthase subunit HisF">
    <location>
        <begin position="1"/>
        <end position="257"/>
    </location>
</feature>
<feature type="active site" evidence="1">
    <location>
        <position position="11"/>
    </location>
</feature>
<feature type="active site" evidence="1">
    <location>
        <position position="130"/>
    </location>
</feature>